<sequence>MEPATVLSIAIGSILLVITGFAIYTAFGPPSAQLSDPFEDHED</sequence>
<proteinExistence type="inferred from homology"/>
<evidence type="ECO:0000255" key="1">
    <source>
        <dbReference type="HAMAP-Rule" id="MF_00293"/>
    </source>
</evidence>
<dbReference type="EMBL" id="CP000806">
    <property type="protein sequence ID" value="ACB53789.1"/>
    <property type="molecule type" value="Genomic_DNA"/>
</dbReference>
<dbReference type="RefSeq" id="WP_009543503.1">
    <property type="nucleotide sequence ID" value="NC_010546.1"/>
</dbReference>
<dbReference type="SMR" id="B1WUD5"/>
<dbReference type="STRING" id="43989.cce_4441"/>
<dbReference type="KEGG" id="cyt:cce_4441"/>
<dbReference type="eggNOG" id="ENOG50339MH">
    <property type="taxonomic scope" value="Bacteria"/>
</dbReference>
<dbReference type="HOGENOM" id="CLU_205504_0_0_3"/>
<dbReference type="OrthoDB" id="532561at2"/>
<dbReference type="Proteomes" id="UP000001203">
    <property type="component" value="Chromosome circular"/>
</dbReference>
<dbReference type="GO" id="GO:0031676">
    <property type="term" value="C:plasma membrane-derived thylakoid membrane"/>
    <property type="evidence" value="ECO:0007669"/>
    <property type="project" value="UniProtKB-SubCell"/>
</dbReference>
<dbReference type="GO" id="GO:0015979">
    <property type="term" value="P:photosynthesis"/>
    <property type="evidence" value="ECO:0007669"/>
    <property type="project" value="InterPro"/>
</dbReference>
<dbReference type="HAMAP" id="MF_00293">
    <property type="entry name" value="PSII_PsbN"/>
    <property type="match status" value="1"/>
</dbReference>
<dbReference type="InterPro" id="IPR003398">
    <property type="entry name" value="PSII_PsbN"/>
</dbReference>
<dbReference type="NCBIfam" id="NF009650">
    <property type="entry name" value="PRK13183.1"/>
    <property type="match status" value="1"/>
</dbReference>
<dbReference type="PANTHER" id="PTHR35326">
    <property type="entry name" value="PROTEIN PSBN"/>
    <property type="match status" value="1"/>
</dbReference>
<dbReference type="PANTHER" id="PTHR35326:SF3">
    <property type="entry name" value="PROTEIN PSBN"/>
    <property type="match status" value="1"/>
</dbReference>
<dbReference type="Pfam" id="PF02468">
    <property type="entry name" value="PsbN"/>
    <property type="match status" value="1"/>
</dbReference>
<keyword id="KW-0472">Membrane</keyword>
<keyword id="KW-1185">Reference proteome</keyword>
<keyword id="KW-0793">Thylakoid</keyword>
<keyword id="KW-0812">Transmembrane</keyword>
<keyword id="KW-1133">Transmembrane helix</keyword>
<accession>B1WUD5</accession>
<feature type="chain" id="PRO_0000362166" description="Protein PsbN">
    <location>
        <begin position="1"/>
        <end position="43"/>
    </location>
</feature>
<feature type="transmembrane region" description="Helical" evidence="1">
    <location>
        <begin position="7"/>
        <end position="27"/>
    </location>
</feature>
<reference key="1">
    <citation type="journal article" date="2008" name="Proc. Natl. Acad. Sci. U.S.A.">
        <title>The genome of Cyanothece 51142, a unicellular diazotrophic cyanobacterium important in the marine nitrogen cycle.</title>
        <authorList>
            <person name="Welsh E.A."/>
            <person name="Liberton M."/>
            <person name="Stoeckel J."/>
            <person name="Loh T."/>
            <person name="Elvitigala T."/>
            <person name="Wang C."/>
            <person name="Wollam A."/>
            <person name="Fulton R.S."/>
            <person name="Clifton S.W."/>
            <person name="Jacobs J.M."/>
            <person name="Aurora R."/>
            <person name="Ghosh B.K."/>
            <person name="Sherman L.A."/>
            <person name="Smith R.D."/>
            <person name="Wilson R.K."/>
            <person name="Pakrasi H.B."/>
        </authorList>
    </citation>
    <scope>NUCLEOTIDE SEQUENCE [LARGE SCALE GENOMIC DNA]</scope>
    <source>
        <strain>ATCC 51142 / BH68</strain>
    </source>
</reference>
<gene>
    <name evidence="1" type="primary">psbN</name>
    <name type="ordered locus">cce_4441</name>
</gene>
<comment type="function">
    <text evidence="1">May play a role in photosystem I and II biogenesis.</text>
</comment>
<comment type="subcellular location">
    <subcellularLocation>
        <location evidence="1">Cellular thylakoid membrane</location>
        <topology evidence="1">Single-pass membrane protein</topology>
    </subcellularLocation>
</comment>
<comment type="similarity">
    <text evidence="1">Belongs to the PsbN family.</text>
</comment>
<comment type="caution">
    <text evidence="1">Originally thought to be a component of PSII; based on experiments in Synechocystis, N.tabacum and barley, and its absence from PSII in T.elongatus and T.vulcanus, this is probably not true.</text>
</comment>
<protein>
    <recommendedName>
        <fullName evidence="1">Protein PsbN</fullName>
    </recommendedName>
</protein>
<organism>
    <name type="scientific">Crocosphaera subtropica (strain ATCC 51142 / BH68)</name>
    <name type="common">Cyanothece sp. (strain ATCC 51142)</name>
    <dbReference type="NCBI Taxonomy" id="43989"/>
    <lineage>
        <taxon>Bacteria</taxon>
        <taxon>Bacillati</taxon>
        <taxon>Cyanobacteriota</taxon>
        <taxon>Cyanophyceae</taxon>
        <taxon>Oscillatoriophycideae</taxon>
        <taxon>Chroococcales</taxon>
        <taxon>Aphanothecaceae</taxon>
        <taxon>Crocosphaera</taxon>
        <taxon>Crocosphaera subtropica</taxon>
    </lineage>
</organism>
<name>PSBN_CROS5</name>